<reference key="1">
    <citation type="submission" date="2008-05" db="EMBL/GenBank/DDBJ databases">
        <title>Complete sequence of Chlorobium limicola DSM 245.</title>
        <authorList>
            <consortium name="US DOE Joint Genome Institute"/>
            <person name="Lucas S."/>
            <person name="Copeland A."/>
            <person name="Lapidus A."/>
            <person name="Glavina del Rio T."/>
            <person name="Dalin E."/>
            <person name="Tice H."/>
            <person name="Bruce D."/>
            <person name="Goodwin L."/>
            <person name="Pitluck S."/>
            <person name="Schmutz J."/>
            <person name="Larimer F."/>
            <person name="Land M."/>
            <person name="Hauser L."/>
            <person name="Kyrpides N."/>
            <person name="Ovchinnikova G."/>
            <person name="Zhao F."/>
            <person name="Li T."/>
            <person name="Liu Z."/>
            <person name="Overmann J."/>
            <person name="Bryant D.A."/>
            <person name="Richardson P."/>
        </authorList>
    </citation>
    <scope>NUCLEOTIDE SEQUENCE [LARGE SCALE GENOMIC DNA]</scope>
    <source>
        <strain>DSM 245 / NBRC 103803 / 6330</strain>
    </source>
</reference>
<sequence length="186" mass="21247">MKVKEVAQKIEPKMKKTIEAFQHEIASIRTGKATTTLLDRVKVEAYGQLMPLKQVGNIGVMDVHTLIVQVWDKSMVSATERAIRDANLGLNPSADGQNIRVSIPPLTEERRKEFVKLTKKFGEDSKVSLRNLRRDMIHDIEKLEKDKAISEDDKNRGKKEADDLLHKFEKQLSDLIALKEKEIMEV</sequence>
<keyword id="KW-0963">Cytoplasm</keyword>
<keyword id="KW-0648">Protein biosynthesis</keyword>
<dbReference type="EMBL" id="CP001097">
    <property type="protein sequence ID" value="ACD89477.1"/>
    <property type="molecule type" value="Genomic_DNA"/>
</dbReference>
<dbReference type="RefSeq" id="WP_012465358.1">
    <property type="nucleotide sequence ID" value="NC_010803.1"/>
</dbReference>
<dbReference type="SMR" id="B3EFU4"/>
<dbReference type="STRING" id="290315.Clim_0384"/>
<dbReference type="KEGG" id="cli:Clim_0384"/>
<dbReference type="eggNOG" id="COG0233">
    <property type="taxonomic scope" value="Bacteria"/>
</dbReference>
<dbReference type="HOGENOM" id="CLU_073981_2_0_10"/>
<dbReference type="OrthoDB" id="9804006at2"/>
<dbReference type="Proteomes" id="UP000008841">
    <property type="component" value="Chromosome"/>
</dbReference>
<dbReference type="GO" id="GO:0005737">
    <property type="term" value="C:cytoplasm"/>
    <property type="evidence" value="ECO:0007669"/>
    <property type="project" value="UniProtKB-SubCell"/>
</dbReference>
<dbReference type="GO" id="GO:0043023">
    <property type="term" value="F:ribosomal large subunit binding"/>
    <property type="evidence" value="ECO:0007669"/>
    <property type="project" value="TreeGrafter"/>
</dbReference>
<dbReference type="GO" id="GO:0006415">
    <property type="term" value="P:translational termination"/>
    <property type="evidence" value="ECO:0007669"/>
    <property type="project" value="UniProtKB-UniRule"/>
</dbReference>
<dbReference type="CDD" id="cd00520">
    <property type="entry name" value="RRF"/>
    <property type="match status" value="1"/>
</dbReference>
<dbReference type="FunFam" id="1.10.132.20:FF:000001">
    <property type="entry name" value="Ribosome-recycling factor"/>
    <property type="match status" value="1"/>
</dbReference>
<dbReference type="FunFam" id="3.30.1360.40:FF:000001">
    <property type="entry name" value="Ribosome-recycling factor"/>
    <property type="match status" value="1"/>
</dbReference>
<dbReference type="Gene3D" id="3.30.1360.40">
    <property type="match status" value="1"/>
</dbReference>
<dbReference type="Gene3D" id="1.10.132.20">
    <property type="entry name" value="Ribosome-recycling factor"/>
    <property type="match status" value="1"/>
</dbReference>
<dbReference type="HAMAP" id="MF_00040">
    <property type="entry name" value="RRF"/>
    <property type="match status" value="1"/>
</dbReference>
<dbReference type="InterPro" id="IPR002661">
    <property type="entry name" value="Ribosome_recyc_fac"/>
</dbReference>
<dbReference type="InterPro" id="IPR023584">
    <property type="entry name" value="Ribosome_recyc_fac_dom"/>
</dbReference>
<dbReference type="InterPro" id="IPR036191">
    <property type="entry name" value="RRF_sf"/>
</dbReference>
<dbReference type="NCBIfam" id="TIGR00496">
    <property type="entry name" value="frr"/>
    <property type="match status" value="1"/>
</dbReference>
<dbReference type="PANTHER" id="PTHR20982:SF3">
    <property type="entry name" value="MITOCHONDRIAL RIBOSOME RECYCLING FACTOR PSEUDO 1"/>
    <property type="match status" value="1"/>
</dbReference>
<dbReference type="PANTHER" id="PTHR20982">
    <property type="entry name" value="RIBOSOME RECYCLING FACTOR"/>
    <property type="match status" value="1"/>
</dbReference>
<dbReference type="Pfam" id="PF01765">
    <property type="entry name" value="RRF"/>
    <property type="match status" value="1"/>
</dbReference>
<dbReference type="SUPFAM" id="SSF55194">
    <property type="entry name" value="Ribosome recycling factor, RRF"/>
    <property type="match status" value="1"/>
</dbReference>
<organism>
    <name type="scientific">Chlorobium limicola (strain DSM 245 / NBRC 103803 / 6330)</name>
    <dbReference type="NCBI Taxonomy" id="290315"/>
    <lineage>
        <taxon>Bacteria</taxon>
        <taxon>Pseudomonadati</taxon>
        <taxon>Chlorobiota</taxon>
        <taxon>Chlorobiia</taxon>
        <taxon>Chlorobiales</taxon>
        <taxon>Chlorobiaceae</taxon>
        <taxon>Chlorobium/Pelodictyon group</taxon>
        <taxon>Chlorobium</taxon>
    </lineage>
</organism>
<proteinExistence type="inferred from homology"/>
<gene>
    <name evidence="1" type="primary">frr</name>
    <name type="ordered locus">Clim_0384</name>
</gene>
<feature type="chain" id="PRO_1000090721" description="Ribosome-recycling factor">
    <location>
        <begin position="1"/>
        <end position="186"/>
    </location>
</feature>
<accession>B3EFU4</accession>
<protein>
    <recommendedName>
        <fullName evidence="1">Ribosome-recycling factor</fullName>
        <shortName evidence="1">RRF</shortName>
    </recommendedName>
    <alternativeName>
        <fullName evidence="1">Ribosome-releasing factor</fullName>
    </alternativeName>
</protein>
<evidence type="ECO:0000255" key="1">
    <source>
        <dbReference type="HAMAP-Rule" id="MF_00040"/>
    </source>
</evidence>
<comment type="function">
    <text evidence="1">Responsible for the release of ribosomes from messenger RNA at the termination of protein biosynthesis. May increase the efficiency of translation by recycling ribosomes from one round of translation to another.</text>
</comment>
<comment type="subcellular location">
    <subcellularLocation>
        <location evidence="1">Cytoplasm</location>
    </subcellularLocation>
</comment>
<comment type="similarity">
    <text evidence="1">Belongs to the RRF family.</text>
</comment>
<name>RRF_CHLL2</name>